<evidence type="ECO:0000255" key="1">
    <source>
        <dbReference type="PROSITE-ProRule" id="PRU00143"/>
    </source>
</evidence>
<feature type="chain" id="PRO_0000065255" description="PDZ domain-containing protein C52A11.3">
    <location>
        <begin position="1"/>
        <end position="131"/>
    </location>
</feature>
<feature type="domain" description="PDZ" evidence="1">
    <location>
        <begin position="51"/>
        <end position="127"/>
    </location>
</feature>
<name>YQJ3_CAEEL</name>
<accession>Q09284</accession>
<gene>
    <name type="ORF">C52A11.3</name>
</gene>
<reference key="1">
    <citation type="journal article" date="1998" name="Science">
        <title>Genome sequence of the nematode C. elegans: a platform for investigating biology.</title>
        <authorList>
            <consortium name="The C. elegans sequencing consortium"/>
        </authorList>
    </citation>
    <scope>NUCLEOTIDE SEQUENCE [LARGE SCALE GENOMIC DNA]</scope>
    <source>
        <strain>Bristol N2</strain>
    </source>
</reference>
<proteinExistence type="predicted"/>
<organism>
    <name type="scientific">Caenorhabditis elegans</name>
    <dbReference type="NCBI Taxonomy" id="6239"/>
    <lineage>
        <taxon>Eukaryota</taxon>
        <taxon>Metazoa</taxon>
        <taxon>Ecdysozoa</taxon>
        <taxon>Nematoda</taxon>
        <taxon>Chromadorea</taxon>
        <taxon>Rhabditida</taxon>
        <taxon>Rhabditina</taxon>
        <taxon>Rhabditomorpha</taxon>
        <taxon>Rhabditoidea</taxon>
        <taxon>Rhabditidae</taxon>
        <taxon>Peloderinae</taxon>
        <taxon>Caenorhabditis</taxon>
    </lineage>
</organism>
<protein>
    <recommendedName>
        <fullName>PDZ domain-containing protein C52A11.3</fullName>
    </recommendedName>
</protein>
<sequence>MRRITCCFPIKIHRRQPPSPPSTITLSSYEYSSLAVGIISDLKEEGCDTLLVKLQKDANRKIGMGVGVRDRGILITTVVPGSVAAEKLKVGDRILAVNGRPILDQRSVVKSVKASGQRLYLQIARPHKVHK</sequence>
<dbReference type="EMBL" id="Z46792">
    <property type="protein sequence ID" value="CAA86765.2"/>
    <property type="molecule type" value="Genomic_DNA"/>
</dbReference>
<dbReference type="PIR" id="T20143">
    <property type="entry name" value="T20143"/>
</dbReference>
<dbReference type="RefSeq" id="NP_496315.2">
    <property type="nucleotide sequence ID" value="NM_063914.4"/>
</dbReference>
<dbReference type="SMR" id="Q09284"/>
<dbReference type="BioGRID" id="48527">
    <property type="interactions" value="9"/>
</dbReference>
<dbReference type="IntAct" id="Q09284">
    <property type="interactions" value="10"/>
</dbReference>
<dbReference type="STRING" id="6239.C52A11.3.1"/>
<dbReference type="PaxDb" id="6239-C52A11.3"/>
<dbReference type="EnsemblMetazoa" id="C52A11.3.1">
    <property type="protein sequence ID" value="C52A11.3.1"/>
    <property type="gene ID" value="WBGene00008257"/>
</dbReference>
<dbReference type="GeneID" id="183712"/>
<dbReference type="KEGG" id="cel:CELE_C52A11.3"/>
<dbReference type="UCSC" id="C52A11.3">
    <property type="organism name" value="c. elegans"/>
</dbReference>
<dbReference type="AGR" id="WB:WBGene00008257"/>
<dbReference type="CTD" id="183712"/>
<dbReference type="WormBase" id="C52A11.3">
    <property type="protein sequence ID" value="CE40833"/>
    <property type="gene ID" value="WBGene00008257"/>
</dbReference>
<dbReference type="eggNOG" id="KOG3528">
    <property type="taxonomic scope" value="Eukaryota"/>
</dbReference>
<dbReference type="HOGENOM" id="CLU_1929461_0_0_1"/>
<dbReference type="InParanoid" id="Q09284"/>
<dbReference type="OrthoDB" id="6022711at2759"/>
<dbReference type="PhylomeDB" id="Q09284"/>
<dbReference type="PRO" id="PR:Q09284"/>
<dbReference type="Proteomes" id="UP000001940">
    <property type="component" value="Chromosome II"/>
</dbReference>
<dbReference type="Gene3D" id="2.30.42.10">
    <property type="match status" value="1"/>
</dbReference>
<dbReference type="InterPro" id="IPR001478">
    <property type="entry name" value="PDZ"/>
</dbReference>
<dbReference type="InterPro" id="IPR051342">
    <property type="entry name" value="PDZ_scaffold"/>
</dbReference>
<dbReference type="InterPro" id="IPR036034">
    <property type="entry name" value="PDZ_sf"/>
</dbReference>
<dbReference type="PANTHER" id="PTHR19964">
    <property type="entry name" value="MULTIPLE PDZ DOMAIN PROTEIN"/>
    <property type="match status" value="1"/>
</dbReference>
<dbReference type="PANTHER" id="PTHR19964:SF92">
    <property type="entry name" value="PATJ HOMOLOG"/>
    <property type="match status" value="1"/>
</dbReference>
<dbReference type="Pfam" id="PF00595">
    <property type="entry name" value="PDZ"/>
    <property type="match status" value="1"/>
</dbReference>
<dbReference type="SMART" id="SM00228">
    <property type="entry name" value="PDZ"/>
    <property type="match status" value="1"/>
</dbReference>
<dbReference type="SUPFAM" id="SSF50156">
    <property type="entry name" value="PDZ domain-like"/>
    <property type="match status" value="1"/>
</dbReference>
<dbReference type="PROSITE" id="PS50106">
    <property type="entry name" value="PDZ"/>
    <property type="match status" value="1"/>
</dbReference>
<keyword id="KW-1185">Reference proteome</keyword>